<sequence>MAGNTFGELFRVTTWGESHGPGIGVVIDGCPPGLALDEAGVQKMLDRRKPGGGSIASTARKEADRAVILSGVFEGKTTGTPILIMAHNRDARSSAYTDIAGLFRPGHGDITYTAKYGIRDWRGGGRASARETFGRVAAGAVAAELLRLSGISVAAYTLELGGIRATTIDVGQVDQNMFGCPDSTVMAAMTDRVTQVKRRGDSVGGIVEVRADGVPAGLGEPVFDKLDADIAKALMSIGAVKGVEIGAGFEASGMTGSRSNDEITPQGFATNNAGGILAGISNGDRIVARAAVKPIPSIGITQQTVDTNGKPASISIKGRHDISAIPRINVVCEAMVCLVLADHLLRQKAISWTR</sequence>
<accession>A8ZT68</accession>
<feature type="chain" id="PRO_1000115347" description="Chorismate synthase">
    <location>
        <begin position="1"/>
        <end position="354"/>
    </location>
</feature>
<feature type="binding site" evidence="1">
    <location>
        <position position="48"/>
    </location>
    <ligand>
        <name>NADP(+)</name>
        <dbReference type="ChEBI" id="CHEBI:58349"/>
    </ligand>
</feature>
<feature type="binding site" evidence="1">
    <location>
        <begin position="126"/>
        <end position="128"/>
    </location>
    <ligand>
        <name>FMN</name>
        <dbReference type="ChEBI" id="CHEBI:58210"/>
    </ligand>
</feature>
<feature type="binding site" evidence="1">
    <location>
        <position position="278"/>
    </location>
    <ligand>
        <name>FMN</name>
        <dbReference type="ChEBI" id="CHEBI:58210"/>
    </ligand>
</feature>
<feature type="binding site" evidence="1">
    <location>
        <begin position="293"/>
        <end position="297"/>
    </location>
    <ligand>
        <name>FMN</name>
        <dbReference type="ChEBI" id="CHEBI:58210"/>
    </ligand>
</feature>
<feature type="binding site" evidence="1">
    <location>
        <position position="319"/>
    </location>
    <ligand>
        <name>FMN</name>
        <dbReference type="ChEBI" id="CHEBI:58210"/>
    </ligand>
</feature>
<keyword id="KW-0028">Amino-acid biosynthesis</keyword>
<keyword id="KW-0057">Aromatic amino acid biosynthesis</keyword>
<keyword id="KW-0274">FAD</keyword>
<keyword id="KW-0285">Flavoprotein</keyword>
<keyword id="KW-0288">FMN</keyword>
<keyword id="KW-0456">Lyase</keyword>
<keyword id="KW-0521">NADP</keyword>
<keyword id="KW-1185">Reference proteome</keyword>
<organism>
    <name type="scientific">Desulfosudis oleivorans (strain DSM 6200 / JCM 39069 / Hxd3)</name>
    <name type="common">Desulfococcus oleovorans</name>
    <dbReference type="NCBI Taxonomy" id="96561"/>
    <lineage>
        <taxon>Bacteria</taxon>
        <taxon>Pseudomonadati</taxon>
        <taxon>Thermodesulfobacteriota</taxon>
        <taxon>Desulfobacteria</taxon>
        <taxon>Desulfobacterales</taxon>
        <taxon>Desulfosudaceae</taxon>
        <taxon>Desulfosudis</taxon>
    </lineage>
</organism>
<dbReference type="EC" id="4.2.3.5" evidence="1"/>
<dbReference type="EMBL" id="CP000859">
    <property type="protein sequence ID" value="ABW67751.1"/>
    <property type="molecule type" value="Genomic_DNA"/>
</dbReference>
<dbReference type="RefSeq" id="WP_012175363.1">
    <property type="nucleotide sequence ID" value="NC_009943.1"/>
</dbReference>
<dbReference type="SMR" id="A8ZT68"/>
<dbReference type="STRING" id="96561.Dole_1947"/>
<dbReference type="KEGG" id="dol:Dole_1947"/>
<dbReference type="eggNOG" id="COG0082">
    <property type="taxonomic scope" value="Bacteria"/>
</dbReference>
<dbReference type="HOGENOM" id="CLU_034547_0_2_7"/>
<dbReference type="OrthoDB" id="9771806at2"/>
<dbReference type="UniPathway" id="UPA00053">
    <property type="reaction ID" value="UER00090"/>
</dbReference>
<dbReference type="Proteomes" id="UP000008561">
    <property type="component" value="Chromosome"/>
</dbReference>
<dbReference type="GO" id="GO:0005829">
    <property type="term" value="C:cytosol"/>
    <property type="evidence" value="ECO:0007669"/>
    <property type="project" value="TreeGrafter"/>
</dbReference>
<dbReference type="GO" id="GO:0004107">
    <property type="term" value="F:chorismate synthase activity"/>
    <property type="evidence" value="ECO:0007669"/>
    <property type="project" value="UniProtKB-UniRule"/>
</dbReference>
<dbReference type="GO" id="GO:0010181">
    <property type="term" value="F:FMN binding"/>
    <property type="evidence" value="ECO:0007669"/>
    <property type="project" value="TreeGrafter"/>
</dbReference>
<dbReference type="GO" id="GO:0008652">
    <property type="term" value="P:amino acid biosynthetic process"/>
    <property type="evidence" value="ECO:0007669"/>
    <property type="project" value="UniProtKB-KW"/>
</dbReference>
<dbReference type="GO" id="GO:0009073">
    <property type="term" value="P:aromatic amino acid family biosynthetic process"/>
    <property type="evidence" value="ECO:0007669"/>
    <property type="project" value="UniProtKB-KW"/>
</dbReference>
<dbReference type="GO" id="GO:0009423">
    <property type="term" value="P:chorismate biosynthetic process"/>
    <property type="evidence" value="ECO:0007669"/>
    <property type="project" value="UniProtKB-UniRule"/>
</dbReference>
<dbReference type="CDD" id="cd07304">
    <property type="entry name" value="Chorismate_synthase"/>
    <property type="match status" value="1"/>
</dbReference>
<dbReference type="Gene3D" id="3.60.150.10">
    <property type="entry name" value="Chorismate synthase AroC"/>
    <property type="match status" value="1"/>
</dbReference>
<dbReference type="HAMAP" id="MF_00300">
    <property type="entry name" value="Chorismate_synth"/>
    <property type="match status" value="1"/>
</dbReference>
<dbReference type="InterPro" id="IPR000453">
    <property type="entry name" value="Chorismate_synth"/>
</dbReference>
<dbReference type="InterPro" id="IPR035904">
    <property type="entry name" value="Chorismate_synth_AroC_sf"/>
</dbReference>
<dbReference type="InterPro" id="IPR020541">
    <property type="entry name" value="Chorismate_synthase_CS"/>
</dbReference>
<dbReference type="NCBIfam" id="TIGR00033">
    <property type="entry name" value="aroC"/>
    <property type="match status" value="1"/>
</dbReference>
<dbReference type="NCBIfam" id="NF003793">
    <property type="entry name" value="PRK05382.1"/>
    <property type="match status" value="1"/>
</dbReference>
<dbReference type="PANTHER" id="PTHR21085">
    <property type="entry name" value="CHORISMATE SYNTHASE"/>
    <property type="match status" value="1"/>
</dbReference>
<dbReference type="PANTHER" id="PTHR21085:SF0">
    <property type="entry name" value="CHORISMATE SYNTHASE"/>
    <property type="match status" value="1"/>
</dbReference>
<dbReference type="Pfam" id="PF01264">
    <property type="entry name" value="Chorismate_synt"/>
    <property type="match status" value="1"/>
</dbReference>
<dbReference type="PIRSF" id="PIRSF001456">
    <property type="entry name" value="Chorismate_synth"/>
    <property type="match status" value="1"/>
</dbReference>
<dbReference type="SUPFAM" id="SSF103263">
    <property type="entry name" value="Chorismate synthase, AroC"/>
    <property type="match status" value="1"/>
</dbReference>
<dbReference type="PROSITE" id="PS00787">
    <property type="entry name" value="CHORISMATE_SYNTHASE_1"/>
    <property type="match status" value="1"/>
</dbReference>
<dbReference type="PROSITE" id="PS00788">
    <property type="entry name" value="CHORISMATE_SYNTHASE_2"/>
    <property type="match status" value="1"/>
</dbReference>
<proteinExistence type="inferred from homology"/>
<gene>
    <name evidence="1" type="primary">aroC</name>
    <name type="ordered locus">Dole_1947</name>
</gene>
<comment type="function">
    <text evidence="1">Catalyzes the anti-1,4-elimination of the C-3 phosphate and the C-6 proR hydrogen from 5-enolpyruvylshikimate-3-phosphate (EPSP) to yield chorismate, which is the branch point compound that serves as the starting substrate for the three terminal pathways of aromatic amino acid biosynthesis. This reaction introduces a second double bond into the aromatic ring system.</text>
</comment>
<comment type="catalytic activity">
    <reaction evidence="1">
        <text>5-O-(1-carboxyvinyl)-3-phosphoshikimate = chorismate + phosphate</text>
        <dbReference type="Rhea" id="RHEA:21020"/>
        <dbReference type="ChEBI" id="CHEBI:29748"/>
        <dbReference type="ChEBI" id="CHEBI:43474"/>
        <dbReference type="ChEBI" id="CHEBI:57701"/>
        <dbReference type="EC" id="4.2.3.5"/>
    </reaction>
</comment>
<comment type="cofactor">
    <cofactor evidence="1">
        <name>FMNH2</name>
        <dbReference type="ChEBI" id="CHEBI:57618"/>
    </cofactor>
    <text evidence="1">Reduced FMN (FMNH(2)).</text>
</comment>
<comment type="pathway">
    <text evidence="1">Metabolic intermediate biosynthesis; chorismate biosynthesis; chorismate from D-erythrose 4-phosphate and phosphoenolpyruvate: step 7/7.</text>
</comment>
<comment type="subunit">
    <text evidence="1">Homotetramer.</text>
</comment>
<comment type="similarity">
    <text evidence="1">Belongs to the chorismate synthase family.</text>
</comment>
<name>AROC_DESOH</name>
<protein>
    <recommendedName>
        <fullName evidence="1">Chorismate synthase</fullName>
        <shortName evidence="1">CS</shortName>
        <ecNumber evidence="1">4.2.3.5</ecNumber>
    </recommendedName>
    <alternativeName>
        <fullName evidence="1">5-enolpyruvylshikimate-3-phosphate phospholyase</fullName>
    </alternativeName>
</protein>
<reference key="1">
    <citation type="submission" date="2007-10" db="EMBL/GenBank/DDBJ databases">
        <title>Complete sequence of Desulfococcus oleovorans Hxd3.</title>
        <authorList>
            <consortium name="US DOE Joint Genome Institute"/>
            <person name="Copeland A."/>
            <person name="Lucas S."/>
            <person name="Lapidus A."/>
            <person name="Barry K."/>
            <person name="Glavina del Rio T."/>
            <person name="Dalin E."/>
            <person name="Tice H."/>
            <person name="Pitluck S."/>
            <person name="Kiss H."/>
            <person name="Brettin T."/>
            <person name="Bruce D."/>
            <person name="Detter J.C."/>
            <person name="Han C."/>
            <person name="Schmutz J."/>
            <person name="Larimer F."/>
            <person name="Land M."/>
            <person name="Hauser L."/>
            <person name="Kyrpides N."/>
            <person name="Kim E."/>
            <person name="Wawrik B."/>
            <person name="Richardson P."/>
        </authorList>
    </citation>
    <scope>NUCLEOTIDE SEQUENCE [LARGE SCALE GENOMIC DNA]</scope>
    <source>
        <strain>DSM 6200 / JCM 39069 / Hxd3</strain>
    </source>
</reference>
<evidence type="ECO:0000255" key="1">
    <source>
        <dbReference type="HAMAP-Rule" id="MF_00300"/>
    </source>
</evidence>